<feature type="chain" id="PRO_0000404251" description="Uncharacterized protein S8">
    <location>
        <begin position="1"/>
        <end position="399"/>
    </location>
</feature>
<feature type="region of interest" description="Disordered" evidence="1">
    <location>
        <begin position="197"/>
        <end position="224"/>
    </location>
</feature>
<feature type="compositionally biased region" description="Polar residues" evidence="1">
    <location>
        <begin position="197"/>
        <end position="206"/>
    </location>
</feature>
<feature type="compositionally biased region" description="Acidic residues" evidence="1">
    <location>
        <begin position="207"/>
        <end position="224"/>
    </location>
</feature>
<accession>Q86284</accession>
<protein>
    <recommendedName>
        <fullName>Uncharacterized protein S8</fullName>
    </recommendedName>
</protein>
<organismHost>
    <name type="scientific">Diadromus pulchellus</name>
    <name type="common">Parasitic wasp</name>
    <dbReference type="NCBI Taxonomy" id="7420"/>
</organismHost>
<name>S8_DPIRV</name>
<evidence type="ECO:0000256" key="1">
    <source>
        <dbReference type="SAM" id="MobiDB-lite"/>
    </source>
</evidence>
<organism>
    <name type="scientific">Diadromus pulchellus idnoreovirus 1</name>
    <name type="common">DpIRV-1</name>
    <dbReference type="NCBI Taxonomy" id="37368"/>
    <lineage>
        <taxon>Viruses</taxon>
        <taxon>Riboviria</taxon>
        <taxon>Orthornavirae</taxon>
        <taxon>Duplornaviricota</taxon>
        <taxon>Resentoviricetes</taxon>
        <taxon>Reovirales</taxon>
        <taxon>Spinareoviridae</taxon>
        <taxon>Idnoreovirus</taxon>
        <taxon>Idnoreovirus 1</taxon>
    </lineage>
</organism>
<proteinExistence type="predicted"/>
<dbReference type="EMBL" id="X82047">
    <property type="protein sequence ID" value="CAA57563.1"/>
    <property type="molecule type" value="Genomic_RNA"/>
</dbReference>
<dbReference type="RefSeq" id="YP_009665944.1">
    <property type="nucleotide sequence ID" value="NC_043367.1"/>
</dbReference>
<dbReference type="SMR" id="Q86284"/>
<dbReference type="GeneID" id="41332098"/>
<reference key="1">
    <citation type="journal article" date="1995" name="Virology">
        <title>The genome segments of DpRV, a commensal reovirus of the wasp Diadromus pulchellus (Hymenoptera).</title>
        <authorList>
            <person name="Bigot Y."/>
            <person name="Drezen J.M."/>
            <person name="Sizaret P.Y."/>
            <person name="Rabouille A."/>
            <person name="Hamelin M.H."/>
            <person name="Periquet G."/>
        </authorList>
    </citation>
    <scope>NUCLEOTIDE SEQUENCE [GENOMIC RNA]</scope>
</reference>
<sequence length="399" mass="44782">MNPVEKARQKLKKKNAAKRNNLTKILNMESTPEAQSVDNISQSQNDLTKSLTTVPKPKSSISTKILKRKELTISDLIKLIFTCDVHEDDIYIVGGLSKSDFTIKKILYKNANVPKILYTNNYVYVHTDDHKIGELASERSKSRLMQTLSLVDINKYDQESQMILSSMKQACEIVRKKQIPLAQENIDTNVERILSGENSSASSVTSEECEQDVMDEQSAEDNEEVSQEIIDALNAVVAPVLENDMDSTESGDIGTELISMFAGQIMEYFSSPLAKENMPEDVLNEEMELLDELEAKVYKIMTASTNKVTKLLLQSAHNYYQGFSDNEKRNLLSRINDLLNPLIEYADKLIDNFCQLYGPADQPITAIGKVLNIAKKIVSVNGLNTNLKLKNGKFILNAE</sequence>